<organism>
    <name type="scientific">Caldanaerobacter subterraneus subsp. tengcongensis (strain DSM 15242 / JCM 11007 / NBRC 100824 / MB4)</name>
    <name type="common">Thermoanaerobacter tengcongensis</name>
    <dbReference type="NCBI Taxonomy" id="273068"/>
    <lineage>
        <taxon>Bacteria</taxon>
        <taxon>Bacillati</taxon>
        <taxon>Bacillota</taxon>
        <taxon>Clostridia</taxon>
        <taxon>Thermoanaerobacterales</taxon>
        <taxon>Thermoanaerobacteraceae</taxon>
        <taxon>Caldanaerobacter</taxon>
    </lineage>
</organism>
<keyword id="KW-0963">Cytoplasm</keyword>
<keyword id="KW-0413">Isomerase</keyword>
<keyword id="KW-0464">Manganese</keyword>
<keyword id="KW-0479">Metal-binding</keyword>
<keyword id="KW-1185">Reference proteome</keyword>
<comment type="function">
    <text evidence="1">Isomerase that catalyzes the conversion of deoxy-ribose 1-phosphate (dRib-1-P) and ribose 1-phosphate (Rib-1-P) to deoxy-ribose 5-phosphate (dRib-5-P) and ribose 5-phosphate (Rib-5-P), respectively.</text>
</comment>
<comment type="catalytic activity">
    <reaction evidence="1">
        <text>2-deoxy-alpha-D-ribose 1-phosphate = 2-deoxy-D-ribose 5-phosphate</text>
        <dbReference type="Rhea" id="RHEA:27658"/>
        <dbReference type="ChEBI" id="CHEBI:57259"/>
        <dbReference type="ChEBI" id="CHEBI:62877"/>
        <dbReference type="EC" id="5.4.2.7"/>
    </reaction>
</comment>
<comment type="catalytic activity">
    <reaction evidence="1">
        <text>alpha-D-ribose 1-phosphate = D-ribose 5-phosphate</text>
        <dbReference type="Rhea" id="RHEA:18793"/>
        <dbReference type="ChEBI" id="CHEBI:57720"/>
        <dbReference type="ChEBI" id="CHEBI:78346"/>
        <dbReference type="EC" id="5.4.2.7"/>
    </reaction>
</comment>
<comment type="cofactor">
    <cofactor evidence="1">
        <name>Mn(2+)</name>
        <dbReference type="ChEBI" id="CHEBI:29035"/>
    </cofactor>
    <text evidence="1">Binds 2 manganese ions.</text>
</comment>
<comment type="pathway">
    <text evidence="1">Carbohydrate degradation; 2-deoxy-D-ribose 1-phosphate degradation; D-glyceraldehyde 3-phosphate and acetaldehyde from 2-deoxy-alpha-D-ribose 1-phosphate: step 1/2.</text>
</comment>
<comment type="subcellular location">
    <subcellularLocation>
        <location evidence="1">Cytoplasm</location>
    </subcellularLocation>
</comment>
<comment type="similarity">
    <text evidence="1">Belongs to the phosphopentomutase family.</text>
</comment>
<proteinExistence type="inferred from homology"/>
<evidence type="ECO:0000255" key="1">
    <source>
        <dbReference type="HAMAP-Rule" id="MF_00740"/>
    </source>
</evidence>
<dbReference type="EC" id="5.4.2.7" evidence="1"/>
<dbReference type="EMBL" id="AE008691">
    <property type="protein sequence ID" value="AAM23746.1"/>
    <property type="molecule type" value="Genomic_DNA"/>
</dbReference>
<dbReference type="RefSeq" id="WP_011024898.1">
    <property type="nucleotide sequence ID" value="NC_003869.1"/>
</dbReference>
<dbReference type="SMR" id="Q8RCG6"/>
<dbReference type="STRING" id="273068.TTE0463"/>
<dbReference type="KEGG" id="tte:TTE0463"/>
<dbReference type="eggNOG" id="COG1015">
    <property type="taxonomic scope" value="Bacteria"/>
</dbReference>
<dbReference type="HOGENOM" id="CLU_053861_0_0_9"/>
<dbReference type="OrthoDB" id="9769930at2"/>
<dbReference type="UniPathway" id="UPA00002">
    <property type="reaction ID" value="UER00467"/>
</dbReference>
<dbReference type="Proteomes" id="UP000000555">
    <property type="component" value="Chromosome"/>
</dbReference>
<dbReference type="GO" id="GO:0005829">
    <property type="term" value="C:cytosol"/>
    <property type="evidence" value="ECO:0007669"/>
    <property type="project" value="TreeGrafter"/>
</dbReference>
<dbReference type="GO" id="GO:0000287">
    <property type="term" value="F:magnesium ion binding"/>
    <property type="evidence" value="ECO:0007669"/>
    <property type="project" value="InterPro"/>
</dbReference>
<dbReference type="GO" id="GO:0030145">
    <property type="term" value="F:manganese ion binding"/>
    <property type="evidence" value="ECO:0007669"/>
    <property type="project" value="UniProtKB-UniRule"/>
</dbReference>
<dbReference type="GO" id="GO:0008973">
    <property type="term" value="F:phosphopentomutase activity"/>
    <property type="evidence" value="ECO:0007669"/>
    <property type="project" value="UniProtKB-UniRule"/>
</dbReference>
<dbReference type="GO" id="GO:0006018">
    <property type="term" value="P:2-deoxyribose 1-phosphate catabolic process"/>
    <property type="evidence" value="ECO:0007669"/>
    <property type="project" value="UniProtKB-UniRule"/>
</dbReference>
<dbReference type="GO" id="GO:0006015">
    <property type="term" value="P:5-phosphoribose 1-diphosphate biosynthetic process"/>
    <property type="evidence" value="ECO:0007669"/>
    <property type="project" value="UniProtKB-UniPathway"/>
</dbReference>
<dbReference type="GO" id="GO:0043094">
    <property type="term" value="P:metabolic compound salvage"/>
    <property type="evidence" value="ECO:0007669"/>
    <property type="project" value="InterPro"/>
</dbReference>
<dbReference type="GO" id="GO:0009117">
    <property type="term" value="P:nucleotide metabolic process"/>
    <property type="evidence" value="ECO:0007669"/>
    <property type="project" value="InterPro"/>
</dbReference>
<dbReference type="CDD" id="cd16009">
    <property type="entry name" value="PPM"/>
    <property type="match status" value="1"/>
</dbReference>
<dbReference type="FunFam" id="3.30.70.1250:FF:000001">
    <property type="entry name" value="Phosphopentomutase"/>
    <property type="match status" value="1"/>
</dbReference>
<dbReference type="Gene3D" id="3.40.720.10">
    <property type="entry name" value="Alkaline Phosphatase, subunit A"/>
    <property type="match status" value="1"/>
</dbReference>
<dbReference type="Gene3D" id="3.30.70.1250">
    <property type="entry name" value="Phosphopentomutase"/>
    <property type="match status" value="1"/>
</dbReference>
<dbReference type="HAMAP" id="MF_00740">
    <property type="entry name" value="Phosphopentomut"/>
    <property type="match status" value="1"/>
</dbReference>
<dbReference type="InterPro" id="IPR017850">
    <property type="entry name" value="Alkaline_phosphatase_core_sf"/>
</dbReference>
<dbReference type="InterPro" id="IPR010045">
    <property type="entry name" value="DeoB"/>
</dbReference>
<dbReference type="InterPro" id="IPR006124">
    <property type="entry name" value="Metalloenzyme"/>
</dbReference>
<dbReference type="InterPro" id="IPR024052">
    <property type="entry name" value="Phosphopentomutase_DeoB_cap_sf"/>
</dbReference>
<dbReference type="NCBIfam" id="TIGR01696">
    <property type="entry name" value="deoB"/>
    <property type="match status" value="1"/>
</dbReference>
<dbReference type="NCBIfam" id="NF003766">
    <property type="entry name" value="PRK05362.1"/>
    <property type="match status" value="1"/>
</dbReference>
<dbReference type="PANTHER" id="PTHR21110">
    <property type="entry name" value="PHOSPHOPENTOMUTASE"/>
    <property type="match status" value="1"/>
</dbReference>
<dbReference type="PANTHER" id="PTHR21110:SF0">
    <property type="entry name" value="PHOSPHOPENTOMUTASE"/>
    <property type="match status" value="1"/>
</dbReference>
<dbReference type="Pfam" id="PF01676">
    <property type="entry name" value="Metalloenzyme"/>
    <property type="match status" value="1"/>
</dbReference>
<dbReference type="PIRSF" id="PIRSF001491">
    <property type="entry name" value="Ppentomutase"/>
    <property type="match status" value="1"/>
</dbReference>
<dbReference type="SUPFAM" id="SSF53649">
    <property type="entry name" value="Alkaline phosphatase-like"/>
    <property type="match status" value="1"/>
</dbReference>
<dbReference type="SUPFAM" id="SSF143856">
    <property type="entry name" value="DeoB insert domain-like"/>
    <property type="match status" value="1"/>
</dbReference>
<gene>
    <name evidence="1" type="primary">deoB</name>
    <name type="ordered locus">TTE0463</name>
</gene>
<feature type="chain" id="PRO_0000199860" description="Phosphopentomutase">
    <location>
        <begin position="1"/>
        <end position="393"/>
    </location>
</feature>
<feature type="binding site" evidence="1">
    <location>
        <position position="11"/>
    </location>
    <ligand>
        <name>Mn(2+)</name>
        <dbReference type="ChEBI" id="CHEBI:29035"/>
        <label>1</label>
    </ligand>
</feature>
<feature type="binding site" evidence="1">
    <location>
        <position position="282"/>
    </location>
    <ligand>
        <name>Mn(2+)</name>
        <dbReference type="ChEBI" id="CHEBI:29035"/>
        <label>2</label>
    </ligand>
</feature>
<feature type="binding site" evidence="1">
    <location>
        <position position="287"/>
    </location>
    <ligand>
        <name>Mn(2+)</name>
        <dbReference type="ChEBI" id="CHEBI:29035"/>
        <label>2</label>
    </ligand>
</feature>
<feature type="binding site" evidence="1">
    <location>
        <position position="323"/>
    </location>
    <ligand>
        <name>Mn(2+)</name>
        <dbReference type="ChEBI" id="CHEBI:29035"/>
        <label>1</label>
    </ligand>
</feature>
<feature type="binding site" evidence="1">
    <location>
        <position position="324"/>
    </location>
    <ligand>
        <name>Mn(2+)</name>
        <dbReference type="ChEBI" id="CHEBI:29035"/>
        <label>1</label>
    </ligand>
</feature>
<feature type="binding site" evidence="1">
    <location>
        <position position="335"/>
    </location>
    <ligand>
        <name>Mn(2+)</name>
        <dbReference type="ChEBI" id="CHEBI:29035"/>
        <label>2</label>
    </ligand>
</feature>
<reference key="1">
    <citation type="journal article" date="2002" name="Genome Res.">
        <title>A complete sequence of the T. tengcongensis genome.</title>
        <authorList>
            <person name="Bao Q."/>
            <person name="Tian Y."/>
            <person name="Li W."/>
            <person name="Xu Z."/>
            <person name="Xuan Z."/>
            <person name="Hu S."/>
            <person name="Dong W."/>
            <person name="Yang J."/>
            <person name="Chen Y."/>
            <person name="Xue Y."/>
            <person name="Xu Y."/>
            <person name="Lai X."/>
            <person name="Huang L."/>
            <person name="Dong X."/>
            <person name="Ma Y."/>
            <person name="Ling L."/>
            <person name="Tan H."/>
            <person name="Chen R."/>
            <person name="Wang J."/>
            <person name="Yu J."/>
            <person name="Yang H."/>
        </authorList>
    </citation>
    <scope>NUCLEOTIDE SEQUENCE [LARGE SCALE GENOMIC DNA]</scope>
    <source>
        <strain>DSM 15242 / JCM 11007 / NBRC 100824 / MB4</strain>
    </source>
</reference>
<sequence>MLQRVILIVLDSVGVGELPDAYKFGDKGTNTLGHVVEKTGIKLPTMEKLGLGNIIPLKTVAPNPNAIGAYGKMAEKSAGKDTTTGHWEIAGLIVEKPFPTYPEGFPKEIIEEFEKRIGRKVLGNKPASGTEIIKELGEEHIKTGYPIVYTSADSVFQIAAHEEVIPLEELYRMCEIAREILKGDHAVGRVIARPFIGSPGNFVRTANRRDFSLKPFGPTVLDMLKEAGYQVYAVGKIEDIFAGQGITDSVHTGNNDEGITATIEAMDAVKKGIIFTNLVDFDMVYGHRNDVNGYAKALKHFDERLPEIMLRLKEEDLLIITADHGCDPTTPGTDHTREYVPLLVYSPSMKEGRNLGLRKTYADVAATIAEIFNVGPIHTGTSFLRELPLKVGV</sequence>
<name>DEOB_CALS4</name>
<accession>Q8RCG6</accession>
<protein>
    <recommendedName>
        <fullName evidence="1">Phosphopentomutase</fullName>
        <ecNumber evidence="1">5.4.2.7</ecNumber>
    </recommendedName>
    <alternativeName>
        <fullName evidence="1">Phosphodeoxyribomutase</fullName>
    </alternativeName>
</protein>